<evidence type="ECO:0000255" key="1">
    <source>
        <dbReference type="HAMAP-Rule" id="MF_00203"/>
    </source>
</evidence>
<proteinExistence type="inferred from homology"/>
<feature type="chain" id="PRO_1000077838" description="UvrABC system protein C">
    <location>
        <begin position="1"/>
        <end position="609"/>
    </location>
</feature>
<feature type="domain" description="GIY-YIG" evidence="1">
    <location>
        <begin position="16"/>
        <end position="94"/>
    </location>
</feature>
<feature type="domain" description="UVR" evidence="1">
    <location>
        <begin position="203"/>
        <end position="238"/>
    </location>
</feature>
<comment type="function">
    <text evidence="1">The UvrABC repair system catalyzes the recognition and processing of DNA lesions. UvrC both incises the 5' and 3' sides of the lesion. The N-terminal half is responsible for the 3' incision and the C-terminal half is responsible for the 5' incision.</text>
</comment>
<comment type="subunit">
    <text evidence="1">Interacts with UvrB in an incision complex.</text>
</comment>
<comment type="subcellular location">
    <subcellularLocation>
        <location evidence="1">Cytoplasm</location>
    </subcellularLocation>
</comment>
<comment type="similarity">
    <text evidence="1">Belongs to the UvrC family.</text>
</comment>
<keyword id="KW-0963">Cytoplasm</keyword>
<keyword id="KW-0227">DNA damage</keyword>
<keyword id="KW-0228">DNA excision</keyword>
<keyword id="KW-0234">DNA repair</keyword>
<keyword id="KW-0267">Excision nuclease</keyword>
<keyword id="KW-1185">Reference proteome</keyword>
<keyword id="KW-0742">SOS response</keyword>
<accession>A3QDZ3</accession>
<dbReference type="EMBL" id="CP000606">
    <property type="protein sequence ID" value="ABO23691.1"/>
    <property type="molecule type" value="Genomic_DNA"/>
</dbReference>
<dbReference type="RefSeq" id="WP_011865623.1">
    <property type="nucleotide sequence ID" value="NC_009092.1"/>
</dbReference>
<dbReference type="SMR" id="A3QDZ3"/>
<dbReference type="STRING" id="323850.Shew_1825"/>
<dbReference type="KEGG" id="slo:Shew_1825"/>
<dbReference type="eggNOG" id="COG0322">
    <property type="taxonomic scope" value="Bacteria"/>
</dbReference>
<dbReference type="HOGENOM" id="CLU_014841_3_0_6"/>
<dbReference type="OrthoDB" id="9804933at2"/>
<dbReference type="Proteomes" id="UP000001558">
    <property type="component" value="Chromosome"/>
</dbReference>
<dbReference type="GO" id="GO:0005737">
    <property type="term" value="C:cytoplasm"/>
    <property type="evidence" value="ECO:0007669"/>
    <property type="project" value="UniProtKB-SubCell"/>
</dbReference>
<dbReference type="GO" id="GO:0009380">
    <property type="term" value="C:excinuclease repair complex"/>
    <property type="evidence" value="ECO:0007669"/>
    <property type="project" value="InterPro"/>
</dbReference>
<dbReference type="GO" id="GO:0003677">
    <property type="term" value="F:DNA binding"/>
    <property type="evidence" value="ECO:0007669"/>
    <property type="project" value="UniProtKB-UniRule"/>
</dbReference>
<dbReference type="GO" id="GO:0009381">
    <property type="term" value="F:excinuclease ABC activity"/>
    <property type="evidence" value="ECO:0007669"/>
    <property type="project" value="UniProtKB-UniRule"/>
</dbReference>
<dbReference type="GO" id="GO:0006289">
    <property type="term" value="P:nucleotide-excision repair"/>
    <property type="evidence" value="ECO:0007669"/>
    <property type="project" value="UniProtKB-UniRule"/>
</dbReference>
<dbReference type="GO" id="GO:0009432">
    <property type="term" value="P:SOS response"/>
    <property type="evidence" value="ECO:0007669"/>
    <property type="project" value="UniProtKB-UniRule"/>
</dbReference>
<dbReference type="CDD" id="cd10434">
    <property type="entry name" value="GIY-YIG_UvrC_Cho"/>
    <property type="match status" value="1"/>
</dbReference>
<dbReference type="FunFam" id="1.10.150.20:FF:000005">
    <property type="entry name" value="UvrABC system protein C"/>
    <property type="match status" value="1"/>
</dbReference>
<dbReference type="FunFam" id="3.30.420.340:FF:000001">
    <property type="entry name" value="UvrABC system protein C"/>
    <property type="match status" value="1"/>
</dbReference>
<dbReference type="FunFam" id="3.40.1440.10:FF:000001">
    <property type="entry name" value="UvrABC system protein C"/>
    <property type="match status" value="1"/>
</dbReference>
<dbReference type="Gene3D" id="1.10.150.20">
    <property type="entry name" value="5' to 3' exonuclease, C-terminal subdomain"/>
    <property type="match status" value="1"/>
</dbReference>
<dbReference type="Gene3D" id="3.40.1440.10">
    <property type="entry name" value="GIY-YIG endonuclease"/>
    <property type="match status" value="1"/>
</dbReference>
<dbReference type="Gene3D" id="4.10.860.10">
    <property type="entry name" value="UVR domain"/>
    <property type="match status" value="1"/>
</dbReference>
<dbReference type="Gene3D" id="3.30.420.340">
    <property type="entry name" value="UvrC, RNAse H endonuclease domain"/>
    <property type="match status" value="1"/>
</dbReference>
<dbReference type="HAMAP" id="MF_00203">
    <property type="entry name" value="UvrC"/>
    <property type="match status" value="1"/>
</dbReference>
<dbReference type="InterPro" id="IPR000305">
    <property type="entry name" value="GIY-YIG_endonuc"/>
</dbReference>
<dbReference type="InterPro" id="IPR035901">
    <property type="entry name" value="GIY-YIG_endonuc_sf"/>
</dbReference>
<dbReference type="InterPro" id="IPR047296">
    <property type="entry name" value="GIY-YIG_UvrC_Cho"/>
</dbReference>
<dbReference type="InterPro" id="IPR003583">
    <property type="entry name" value="Hlx-hairpin-Hlx_DNA-bd_motif"/>
</dbReference>
<dbReference type="InterPro" id="IPR010994">
    <property type="entry name" value="RuvA_2-like"/>
</dbReference>
<dbReference type="InterPro" id="IPR001943">
    <property type="entry name" value="UVR_dom"/>
</dbReference>
<dbReference type="InterPro" id="IPR036876">
    <property type="entry name" value="UVR_dom_sf"/>
</dbReference>
<dbReference type="InterPro" id="IPR050066">
    <property type="entry name" value="UvrABC_protein_C"/>
</dbReference>
<dbReference type="InterPro" id="IPR004791">
    <property type="entry name" value="UvrC"/>
</dbReference>
<dbReference type="InterPro" id="IPR001162">
    <property type="entry name" value="UvrC_RNase_H_dom"/>
</dbReference>
<dbReference type="InterPro" id="IPR038476">
    <property type="entry name" value="UvrC_RNase_H_dom_sf"/>
</dbReference>
<dbReference type="NCBIfam" id="NF001824">
    <property type="entry name" value="PRK00558.1-5"/>
    <property type="match status" value="1"/>
</dbReference>
<dbReference type="NCBIfam" id="TIGR00194">
    <property type="entry name" value="uvrC"/>
    <property type="match status" value="1"/>
</dbReference>
<dbReference type="PANTHER" id="PTHR30562:SF1">
    <property type="entry name" value="UVRABC SYSTEM PROTEIN C"/>
    <property type="match status" value="1"/>
</dbReference>
<dbReference type="PANTHER" id="PTHR30562">
    <property type="entry name" value="UVRC/OXIDOREDUCTASE"/>
    <property type="match status" value="1"/>
</dbReference>
<dbReference type="Pfam" id="PF01541">
    <property type="entry name" value="GIY-YIG"/>
    <property type="match status" value="1"/>
</dbReference>
<dbReference type="Pfam" id="PF14520">
    <property type="entry name" value="HHH_5"/>
    <property type="match status" value="1"/>
</dbReference>
<dbReference type="Pfam" id="PF02151">
    <property type="entry name" value="UVR"/>
    <property type="match status" value="1"/>
</dbReference>
<dbReference type="Pfam" id="PF22920">
    <property type="entry name" value="UvrC_RNaseH"/>
    <property type="match status" value="1"/>
</dbReference>
<dbReference type="Pfam" id="PF08459">
    <property type="entry name" value="UvrC_RNaseH_dom"/>
    <property type="match status" value="1"/>
</dbReference>
<dbReference type="SMART" id="SM00465">
    <property type="entry name" value="GIYc"/>
    <property type="match status" value="1"/>
</dbReference>
<dbReference type="SMART" id="SM00278">
    <property type="entry name" value="HhH1"/>
    <property type="match status" value="2"/>
</dbReference>
<dbReference type="SUPFAM" id="SSF46600">
    <property type="entry name" value="C-terminal UvrC-binding domain of UvrB"/>
    <property type="match status" value="1"/>
</dbReference>
<dbReference type="SUPFAM" id="SSF82771">
    <property type="entry name" value="GIY-YIG endonuclease"/>
    <property type="match status" value="1"/>
</dbReference>
<dbReference type="SUPFAM" id="SSF47781">
    <property type="entry name" value="RuvA domain 2-like"/>
    <property type="match status" value="1"/>
</dbReference>
<dbReference type="PROSITE" id="PS50164">
    <property type="entry name" value="GIY_YIG"/>
    <property type="match status" value="1"/>
</dbReference>
<dbReference type="PROSITE" id="PS50151">
    <property type="entry name" value="UVR"/>
    <property type="match status" value="1"/>
</dbReference>
<dbReference type="PROSITE" id="PS50165">
    <property type="entry name" value="UVRC"/>
    <property type="match status" value="1"/>
</dbReference>
<name>UVRC_SHELP</name>
<sequence>MTDSFNATQFLKTVSSSAGVYRMYDAQGVVIYVGKAKDLKKRLSSYFRRNLPNVKTQALVSHIANIDVTLTPSETDALILENDYIKQYMPRYNVLLRDDKSYPYIFLSGHRHPRLAYHRGPQREKGHYFGPYPNGGAVRESLHLMQKLFPIRQCDDLYYKARSRPCLQYQIARCSAPCVGKISDEDYAEQVKLASLFLRGKDQQVIATLVGKMEQAAMDLNYEDAARYRDQISALRRVAEQQEVSSDSGDMDVIGAYYASGIACFHLLFIRNGKIFGSRSYYPSVPDETEVSEVLRAFMLQFYLNVDSQRTLPREIVVSHEFEDIHELEEAIAQASNRRLLIKTKVRSERASFLRIADANAKNAVETRLSHQNTVEERFLLLEEALEQSQAINRMECFDISHTMGESTVASCVVFNREGPSKGEYRRYNISGITPGDDYAAMKQAIGRRFDKIEADGKIPDILFIDGGMGQLRIAQKVVNEKFAHLDVAPTLIGVAKGEGRKPGLETLIYGENEVAFSLPADSGALHLIQHIRDESHRFAITGHRNKRQKTRNTSTLESIPGVGPKRRKALLQYLGGLQQVKGASVAQLSKVPGISLEMAQTIHDALRG</sequence>
<reference key="1">
    <citation type="submission" date="2007-03" db="EMBL/GenBank/DDBJ databases">
        <title>Complete sequence of Shewanella loihica PV-4.</title>
        <authorList>
            <consortium name="US DOE Joint Genome Institute"/>
            <person name="Copeland A."/>
            <person name="Lucas S."/>
            <person name="Lapidus A."/>
            <person name="Barry K."/>
            <person name="Detter J.C."/>
            <person name="Glavina del Rio T."/>
            <person name="Hammon N."/>
            <person name="Israni S."/>
            <person name="Dalin E."/>
            <person name="Tice H."/>
            <person name="Pitluck S."/>
            <person name="Chain P."/>
            <person name="Malfatti S."/>
            <person name="Shin M."/>
            <person name="Vergez L."/>
            <person name="Schmutz J."/>
            <person name="Larimer F."/>
            <person name="Land M."/>
            <person name="Hauser L."/>
            <person name="Kyrpides N."/>
            <person name="Mikhailova N."/>
            <person name="Romine M.F."/>
            <person name="Serres G."/>
            <person name="Fredrickson J."/>
            <person name="Tiedje J."/>
            <person name="Richardson P."/>
        </authorList>
    </citation>
    <scope>NUCLEOTIDE SEQUENCE [LARGE SCALE GENOMIC DNA]</scope>
    <source>
        <strain>ATCC BAA-1088 / PV-4</strain>
    </source>
</reference>
<organism>
    <name type="scientific">Shewanella loihica (strain ATCC BAA-1088 / PV-4)</name>
    <dbReference type="NCBI Taxonomy" id="323850"/>
    <lineage>
        <taxon>Bacteria</taxon>
        <taxon>Pseudomonadati</taxon>
        <taxon>Pseudomonadota</taxon>
        <taxon>Gammaproteobacteria</taxon>
        <taxon>Alteromonadales</taxon>
        <taxon>Shewanellaceae</taxon>
        <taxon>Shewanella</taxon>
    </lineage>
</organism>
<gene>
    <name evidence="1" type="primary">uvrC</name>
    <name type="ordered locus">Shew_1825</name>
</gene>
<protein>
    <recommendedName>
        <fullName evidence="1">UvrABC system protein C</fullName>
        <shortName evidence="1">Protein UvrC</shortName>
    </recommendedName>
    <alternativeName>
        <fullName evidence="1">Excinuclease ABC subunit C</fullName>
    </alternativeName>
</protein>